<gene>
    <name type="primary">ANX1</name>
    <name type="ordered locus">At3g04690</name>
    <name type="ORF">F7O18.16</name>
</gene>
<feature type="signal peptide" evidence="2">
    <location>
        <begin position="1"/>
        <end position="26"/>
    </location>
</feature>
<feature type="chain" id="PRO_0000385331" description="Receptor-like protein kinase ANXUR1">
    <location>
        <begin position="27"/>
        <end position="850"/>
    </location>
</feature>
<feature type="topological domain" description="Extracellular" evidence="2">
    <location>
        <begin position="27"/>
        <end position="429"/>
    </location>
</feature>
<feature type="transmembrane region" description="Helical" evidence="2">
    <location>
        <begin position="430"/>
        <end position="450"/>
    </location>
</feature>
<feature type="topological domain" description="Cytoplasmic" evidence="2">
    <location>
        <begin position="451"/>
        <end position="850"/>
    </location>
</feature>
<feature type="domain" description="Protein kinase" evidence="3">
    <location>
        <begin position="517"/>
        <end position="790"/>
    </location>
</feature>
<feature type="region of interest" description="Disordered" evidence="5">
    <location>
        <begin position="796"/>
        <end position="850"/>
    </location>
</feature>
<feature type="compositionally biased region" description="Polar residues" evidence="5">
    <location>
        <begin position="839"/>
        <end position="850"/>
    </location>
</feature>
<feature type="active site" description="Proton acceptor" evidence="3 4">
    <location>
        <position position="641"/>
    </location>
</feature>
<feature type="binding site" evidence="3">
    <location>
        <begin position="523"/>
        <end position="531"/>
    </location>
    <ligand>
        <name>ATP</name>
        <dbReference type="ChEBI" id="CHEBI:30616"/>
    </ligand>
</feature>
<feature type="binding site" evidence="3">
    <location>
        <position position="545"/>
    </location>
    <ligand>
        <name>ATP</name>
        <dbReference type="ChEBI" id="CHEBI:30616"/>
    </ligand>
</feature>
<feature type="glycosylation site" description="N-linked (GlcNAc...) asparagine" evidence="7 8">
    <location>
        <position position="114"/>
    </location>
</feature>
<feature type="glycosylation site" description="N-linked (GlcNAc...) asparagine" evidence="7 8">
    <location>
        <position position="132"/>
    </location>
</feature>
<feature type="glycosylation site" description="N-linked (GlcNAc...) asparagine" evidence="7 8">
    <location>
        <position position="292"/>
    </location>
</feature>
<feature type="glycosylation site" description="N-linked (GlcNAc...) asparagine" evidence="7 8">
    <location>
        <position position="302"/>
    </location>
</feature>
<feature type="glycosylation site" description="N-linked (GlcNAc...) asparagine" evidence="2">
    <location>
        <position position="330"/>
    </location>
</feature>
<feature type="strand" evidence="11">
    <location>
        <begin position="29"/>
        <end position="32"/>
    </location>
</feature>
<feature type="strand" evidence="11">
    <location>
        <begin position="46"/>
        <end position="50"/>
    </location>
</feature>
<feature type="helix" evidence="11">
    <location>
        <begin position="51"/>
        <end position="53"/>
    </location>
</feature>
<feature type="strand" evidence="11">
    <location>
        <begin position="54"/>
        <end position="57"/>
    </location>
</feature>
<feature type="strand" evidence="11">
    <location>
        <begin position="60"/>
        <end position="63"/>
    </location>
</feature>
<feature type="turn" evidence="11">
    <location>
        <begin position="75"/>
        <end position="78"/>
    </location>
</feature>
<feature type="strand" evidence="11">
    <location>
        <begin position="79"/>
        <end position="85"/>
    </location>
</feature>
<feature type="strand" evidence="11">
    <location>
        <begin position="87"/>
        <end position="92"/>
    </location>
</feature>
<feature type="strand" evidence="11">
    <location>
        <begin position="97"/>
        <end position="105"/>
    </location>
</feature>
<feature type="helix" evidence="11">
    <location>
        <begin position="115"/>
        <end position="117"/>
    </location>
</feature>
<feature type="strand" evidence="11">
    <location>
        <begin position="120"/>
        <end position="124"/>
    </location>
</feature>
<feature type="strand" evidence="11">
    <location>
        <begin position="127"/>
        <end position="133"/>
    </location>
</feature>
<feature type="helix" evidence="11">
    <location>
        <begin position="135"/>
        <end position="142"/>
    </location>
</feature>
<feature type="strand" evidence="11">
    <location>
        <begin position="147"/>
        <end position="153"/>
    </location>
</feature>
<feature type="strand" evidence="11">
    <location>
        <begin position="159"/>
        <end position="167"/>
    </location>
</feature>
<feature type="strand" evidence="11">
    <location>
        <begin position="169"/>
        <end position="171"/>
    </location>
</feature>
<feature type="strand" evidence="11">
    <location>
        <begin position="176"/>
        <end position="186"/>
    </location>
</feature>
<feature type="strand" evidence="11">
    <location>
        <begin position="192"/>
        <end position="195"/>
    </location>
</feature>
<feature type="strand" evidence="11">
    <location>
        <begin position="198"/>
        <end position="200"/>
    </location>
</feature>
<feature type="strand" evidence="11">
    <location>
        <begin position="202"/>
        <end position="204"/>
    </location>
</feature>
<feature type="strand" evidence="11">
    <location>
        <begin position="210"/>
        <end position="217"/>
    </location>
</feature>
<feature type="helix" evidence="11">
    <location>
        <begin position="225"/>
        <end position="227"/>
    </location>
</feature>
<feature type="helix" evidence="10">
    <location>
        <begin position="229"/>
        <end position="231"/>
    </location>
</feature>
<feature type="strand" evidence="11">
    <location>
        <begin position="236"/>
        <end position="239"/>
    </location>
</feature>
<feature type="helix" evidence="11">
    <location>
        <begin position="240"/>
        <end position="242"/>
    </location>
</feature>
<feature type="strand" evidence="9">
    <location>
        <begin position="245"/>
        <end position="247"/>
    </location>
</feature>
<feature type="strand" evidence="11">
    <location>
        <begin position="250"/>
        <end position="253"/>
    </location>
</feature>
<feature type="helix" evidence="11">
    <location>
        <begin position="267"/>
        <end position="269"/>
    </location>
</feature>
<feature type="helix" evidence="11">
    <location>
        <begin position="272"/>
        <end position="275"/>
    </location>
</feature>
<feature type="strand" evidence="11">
    <location>
        <begin position="277"/>
        <end position="280"/>
    </location>
</feature>
<feature type="helix" evidence="11">
    <location>
        <begin position="285"/>
        <end position="289"/>
    </location>
</feature>
<feature type="strand" evidence="11">
    <location>
        <begin position="293"/>
        <end position="298"/>
    </location>
</feature>
<feature type="strand" evidence="11">
    <location>
        <begin position="301"/>
        <end position="312"/>
    </location>
</feature>
<feature type="strand" evidence="11">
    <location>
        <begin position="324"/>
        <end position="328"/>
    </location>
</feature>
<feature type="strand" evidence="11">
    <location>
        <begin position="331"/>
        <end position="334"/>
    </location>
</feature>
<feature type="helix" evidence="11">
    <location>
        <begin position="342"/>
        <end position="346"/>
    </location>
</feature>
<feature type="strand" evidence="11">
    <location>
        <begin position="352"/>
        <end position="362"/>
    </location>
</feature>
<feature type="turn" evidence="11">
    <location>
        <begin position="363"/>
        <end position="365"/>
    </location>
</feature>
<feature type="strand" evidence="11">
    <location>
        <begin position="369"/>
        <end position="376"/>
    </location>
</feature>
<feature type="strand" evidence="11">
    <location>
        <begin position="388"/>
        <end position="397"/>
    </location>
</feature>
<feature type="strand" evidence="10">
    <location>
        <begin position="399"/>
        <end position="402"/>
    </location>
</feature>
<dbReference type="EC" id="2.7.11.1"/>
<dbReference type="EMBL" id="AC011437">
    <property type="protein sequence ID" value="AAF04910.1"/>
    <property type="molecule type" value="Genomic_DNA"/>
</dbReference>
<dbReference type="EMBL" id="CP002686">
    <property type="protein sequence ID" value="AEE74120.1"/>
    <property type="molecule type" value="Genomic_DNA"/>
</dbReference>
<dbReference type="RefSeq" id="NP_187120.1">
    <property type="nucleotide sequence ID" value="NM_111341.3"/>
</dbReference>
<dbReference type="PDB" id="5Y96">
    <property type="method" value="X-ray"/>
    <property type="resolution" value="1.80 A"/>
    <property type="chains" value="A=27-410, B=28-410"/>
</dbReference>
<dbReference type="PDB" id="6A5A">
    <property type="method" value="X-ray"/>
    <property type="resolution" value="2.94 A"/>
    <property type="chains" value="A/B=26-410"/>
</dbReference>
<dbReference type="PDB" id="6FIG">
    <property type="method" value="X-ray"/>
    <property type="resolution" value="1.48 A"/>
    <property type="chains" value="A/B=26-429"/>
</dbReference>
<dbReference type="PDBsum" id="5Y96"/>
<dbReference type="PDBsum" id="6A5A"/>
<dbReference type="PDBsum" id="6FIG"/>
<dbReference type="SMR" id="Q9SR05"/>
<dbReference type="FunCoup" id="Q9SR05">
    <property type="interactions" value="377"/>
</dbReference>
<dbReference type="STRING" id="3702.Q9SR05"/>
<dbReference type="UniLectin" id="Q9SR05"/>
<dbReference type="GlyCosmos" id="Q9SR05">
    <property type="glycosylation" value="5 sites, No reported glycans"/>
</dbReference>
<dbReference type="GlyGen" id="Q9SR05">
    <property type="glycosylation" value="6 sites"/>
</dbReference>
<dbReference type="iPTMnet" id="Q9SR05"/>
<dbReference type="PaxDb" id="3702-AT3G04690.1"/>
<dbReference type="ProteomicsDB" id="244468"/>
<dbReference type="EnsemblPlants" id="AT3G04690.1">
    <property type="protein sequence ID" value="AT3G04690.1"/>
    <property type="gene ID" value="AT3G04690"/>
</dbReference>
<dbReference type="GeneID" id="819627"/>
<dbReference type="Gramene" id="AT3G04690.1">
    <property type="protein sequence ID" value="AT3G04690.1"/>
    <property type="gene ID" value="AT3G04690"/>
</dbReference>
<dbReference type="KEGG" id="ath:AT3G04690"/>
<dbReference type="Araport" id="AT3G04690"/>
<dbReference type="TAIR" id="AT3G04690">
    <property type="gene designation" value="ANX1"/>
</dbReference>
<dbReference type="eggNOG" id="KOG1187">
    <property type="taxonomic scope" value="Eukaryota"/>
</dbReference>
<dbReference type="HOGENOM" id="CLU_000288_42_4_1"/>
<dbReference type="InParanoid" id="Q9SR05"/>
<dbReference type="OMA" id="MTIRYDD"/>
<dbReference type="PhylomeDB" id="Q9SR05"/>
<dbReference type="PRO" id="PR:Q9SR05"/>
<dbReference type="Proteomes" id="UP000006548">
    <property type="component" value="Chromosome 3"/>
</dbReference>
<dbReference type="ExpressionAtlas" id="Q9SR05">
    <property type="expression patterns" value="baseline and differential"/>
</dbReference>
<dbReference type="GO" id="GO:0016324">
    <property type="term" value="C:apical plasma membrane"/>
    <property type="evidence" value="ECO:0000314"/>
    <property type="project" value="TAIR"/>
</dbReference>
<dbReference type="GO" id="GO:0090404">
    <property type="term" value="C:pollen tube tip"/>
    <property type="evidence" value="ECO:0000314"/>
    <property type="project" value="TAIR"/>
</dbReference>
<dbReference type="GO" id="GO:0005524">
    <property type="term" value="F:ATP binding"/>
    <property type="evidence" value="ECO:0007669"/>
    <property type="project" value="UniProtKB-KW"/>
</dbReference>
<dbReference type="GO" id="GO:0106310">
    <property type="term" value="F:protein serine kinase activity"/>
    <property type="evidence" value="ECO:0007669"/>
    <property type="project" value="RHEA"/>
</dbReference>
<dbReference type="GO" id="GO:0004674">
    <property type="term" value="F:protein serine/threonine kinase activity"/>
    <property type="evidence" value="ECO:0007669"/>
    <property type="project" value="UniProtKB-KW"/>
</dbReference>
<dbReference type="GO" id="GO:0004714">
    <property type="term" value="F:transmembrane receptor protein tyrosine kinase activity"/>
    <property type="evidence" value="ECO:0007669"/>
    <property type="project" value="InterPro"/>
</dbReference>
<dbReference type="CDD" id="cd14066">
    <property type="entry name" value="STKc_IRAK"/>
    <property type="match status" value="1"/>
</dbReference>
<dbReference type="FunFam" id="2.60.120.430:FF:000003">
    <property type="entry name" value="FERONIA receptor-like kinase"/>
    <property type="match status" value="1"/>
</dbReference>
<dbReference type="FunFam" id="2.60.120.430:FF:000007">
    <property type="entry name" value="FERONIA receptor-like kinase"/>
    <property type="match status" value="1"/>
</dbReference>
<dbReference type="FunFam" id="1.10.510.10:FF:000058">
    <property type="entry name" value="Receptor-like protein kinase FERONIA"/>
    <property type="match status" value="1"/>
</dbReference>
<dbReference type="FunFam" id="3.30.200.20:FF:000039">
    <property type="entry name" value="receptor-like protein kinase FERONIA"/>
    <property type="match status" value="1"/>
</dbReference>
<dbReference type="Gene3D" id="2.60.120.430">
    <property type="entry name" value="Galactose-binding lectin"/>
    <property type="match status" value="2"/>
</dbReference>
<dbReference type="Gene3D" id="3.30.200.20">
    <property type="entry name" value="Phosphorylase Kinase, domain 1"/>
    <property type="match status" value="1"/>
</dbReference>
<dbReference type="Gene3D" id="1.10.510.10">
    <property type="entry name" value="Transferase(Phosphotransferase) domain 1"/>
    <property type="match status" value="1"/>
</dbReference>
<dbReference type="InterPro" id="IPR045272">
    <property type="entry name" value="ANXUR1/2-like"/>
</dbReference>
<dbReference type="InterPro" id="IPR011009">
    <property type="entry name" value="Kinase-like_dom_sf"/>
</dbReference>
<dbReference type="InterPro" id="IPR024788">
    <property type="entry name" value="Malectin-like_Carb-bd_dom"/>
</dbReference>
<dbReference type="InterPro" id="IPR000719">
    <property type="entry name" value="Prot_kinase_dom"/>
</dbReference>
<dbReference type="InterPro" id="IPR017441">
    <property type="entry name" value="Protein_kinase_ATP_BS"/>
</dbReference>
<dbReference type="InterPro" id="IPR001245">
    <property type="entry name" value="Ser-Thr/Tyr_kinase_cat_dom"/>
</dbReference>
<dbReference type="InterPro" id="IPR008271">
    <property type="entry name" value="Ser/Thr_kinase_AS"/>
</dbReference>
<dbReference type="PANTHER" id="PTHR34590">
    <property type="entry name" value="OS03G0124300 PROTEIN-RELATED"/>
    <property type="match status" value="1"/>
</dbReference>
<dbReference type="PANTHER" id="PTHR34590:SF5">
    <property type="entry name" value="OS04G0586500 PROTEIN"/>
    <property type="match status" value="1"/>
</dbReference>
<dbReference type="Pfam" id="PF12819">
    <property type="entry name" value="Malectin_like"/>
    <property type="match status" value="1"/>
</dbReference>
<dbReference type="Pfam" id="PF07714">
    <property type="entry name" value="PK_Tyr_Ser-Thr"/>
    <property type="match status" value="1"/>
</dbReference>
<dbReference type="SMART" id="SM00220">
    <property type="entry name" value="S_TKc"/>
    <property type="match status" value="1"/>
</dbReference>
<dbReference type="SUPFAM" id="SSF56112">
    <property type="entry name" value="Protein kinase-like (PK-like)"/>
    <property type="match status" value="1"/>
</dbReference>
<dbReference type="PROSITE" id="PS00107">
    <property type="entry name" value="PROTEIN_KINASE_ATP"/>
    <property type="match status" value="1"/>
</dbReference>
<dbReference type="PROSITE" id="PS50011">
    <property type="entry name" value="PROTEIN_KINASE_DOM"/>
    <property type="match status" value="1"/>
</dbReference>
<dbReference type="PROSITE" id="PS00108">
    <property type="entry name" value="PROTEIN_KINASE_ST"/>
    <property type="match status" value="1"/>
</dbReference>
<evidence type="ECO:0000250" key="1"/>
<evidence type="ECO:0000255" key="2"/>
<evidence type="ECO:0000255" key="3">
    <source>
        <dbReference type="PROSITE-ProRule" id="PRU00159"/>
    </source>
</evidence>
<evidence type="ECO:0000255" key="4">
    <source>
        <dbReference type="PROSITE-ProRule" id="PRU10027"/>
    </source>
</evidence>
<evidence type="ECO:0000256" key="5">
    <source>
        <dbReference type="SAM" id="MobiDB-lite"/>
    </source>
</evidence>
<evidence type="ECO:0000269" key="6">
    <source>
    </source>
</evidence>
<evidence type="ECO:0000269" key="7">
    <source>
    </source>
</evidence>
<evidence type="ECO:0007744" key="8">
    <source>
        <dbReference type="PDB" id="5Y96"/>
    </source>
</evidence>
<evidence type="ECO:0007829" key="9">
    <source>
        <dbReference type="PDB" id="5Y96"/>
    </source>
</evidence>
<evidence type="ECO:0007829" key="10">
    <source>
        <dbReference type="PDB" id="6A5A"/>
    </source>
</evidence>
<evidence type="ECO:0007829" key="11">
    <source>
        <dbReference type="PDB" id="6FIG"/>
    </source>
</evidence>
<name>ANX1_ARATH</name>
<protein>
    <recommendedName>
        <fullName>Receptor-like protein kinase ANXUR1</fullName>
        <ecNumber>2.7.11.1</ecNumber>
    </recommendedName>
</protein>
<accession>Q9SR05</accession>
<proteinExistence type="evidence at protein level"/>
<organism>
    <name type="scientific">Arabidopsis thaliana</name>
    <name type="common">Mouse-ear cress</name>
    <dbReference type="NCBI Taxonomy" id="3702"/>
    <lineage>
        <taxon>Eukaryota</taxon>
        <taxon>Viridiplantae</taxon>
        <taxon>Streptophyta</taxon>
        <taxon>Embryophyta</taxon>
        <taxon>Tracheophyta</taxon>
        <taxon>Spermatophyta</taxon>
        <taxon>Magnoliopsida</taxon>
        <taxon>eudicotyledons</taxon>
        <taxon>Gunneridae</taxon>
        <taxon>Pentapetalae</taxon>
        <taxon>rosids</taxon>
        <taxon>malvids</taxon>
        <taxon>Brassicales</taxon>
        <taxon>Brassicaceae</taxon>
        <taxon>Camelineae</taxon>
        <taxon>Arabidopsis</taxon>
    </lineage>
</organism>
<reference key="1">
    <citation type="journal article" date="2000" name="Nature">
        <title>Sequence and analysis of chromosome 3 of the plant Arabidopsis thaliana.</title>
        <authorList>
            <person name="Salanoubat M."/>
            <person name="Lemcke K."/>
            <person name="Rieger M."/>
            <person name="Ansorge W."/>
            <person name="Unseld M."/>
            <person name="Fartmann B."/>
            <person name="Valle G."/>
            <person name="Bloecker H."/>
            <person name="Perez-Alonso M."/>
            <person name="Obermaier B."/>
            <person name="Delseny M."/>
            <person name="Boutry M."/>
            <person name="Grivell L.A."/>
            <person name="Mache R."/>
            <person name="Puigdomenech P."/>
            <person name="De Simone V."/>
            <person name="Choisne N."/>
            <person name="Artiguenave F."/>
            <person name="Robert C."/>
            <person name="Brottier P."/>
            <person name="Wincker P."/>
            <person name="Cattolico L."/>
            <person name="Weissenbach J."/>
            <person name="Saurin W."/>
            <person name="Quetier F."/>
            <person name="Schaefer M."/>
            <person name="Mueller-Auer S."/>
            <person name="Gabel C."/>
            <person name="Fuchs M."/>
            <person name="Benes V."/>
            <person name="Wurmbach E."/>
            <person name="Drzonek H."/>
            <person name="Erfle H."/>
            <person name="Jordan N."/>
            <person name="Bangert S."/>
            <person name="Wiedelmann R."/>
            <person name="Kranz H."/>
            <person name="Voss H."/>
            <person name="Holland R."/>
            <person name="Brandt P."/>
            <person name="Nyakatura G."/>
            <person name="Vezzi A."/>
            <person name="D'Angelo M."/>
            <person name="Pallavicini A."/>
            <person name="Toppo S."/>
            <person name="Simionati B."/>
            <person name="Conrad A."/>
            <person name="Hornischer K."/>
            <person name="Kauer G."/>
            <person name="Loehnert T.-H."/>
            <person name="Nordsiek G."/>
            <person name="Reichelt J."/>
            <person name="Scharfe M."/>
            <person name="Schoen O."/>
            <person name="Bargues M."/>
            <person name="Terol J."/>
            <person name="Climent J."/>
            <person name="Navarro P."/>
            <person name="Collado C."/>
            <person name="Perez-Perez A."/>
            <person name="Ottenwaelder B."/>
            <person name="Duchemin D."/>
            <person name="Cooke R."/>
            <person name="Laudie M."/>
            <person name="Berger-Llauro C."/>
            <person name="Purnelle B."/>
            <person name="Masuy D."/>
            <person name="de Haan M."/>
            <person name="Maarse A.C."/>
            <person name="Alcaraz J.-P."/>
            <person name="Cottet A."/>
            <person name="Casacuberta E."/>
            <person name="Monfort A."/>
            <person name="Argiriou A."/>
            <person name="Flores M."/>
            <person name="Liguori R."/>
            <person name="Vitale D."/>
            <person name="Mannhaupt G."/>
            <person name="Haase D."/>
            <person name="Schoof H."/>
            <person name="Rudd S."/>
            <person name="Zaccaria P."/>
            <person name="Mewes H.-W."/>
            <person name="Mayer K.F.X."/>
            <person name="Kaul S."/>
            <person name="Town C.D."/>
            <person name="Koo H.L."/>
            <person name="Tallon L.J."/>
            <person name="Jenkins J."/>
            <person name="Rooney T."/>
            <person name="Rizzo M."/>
            <person name="Walts A."/>
            <person name="Utterback T."/>
            <person name="Fujii C.Y."/>
            <person name="Shea T.P."/>
            <person name="Creasy T.H."/>
            <person name="Haas B."/>
            <person name="Maiti R."/>
            <person name="Wu D."/>
            <person name="Peterson J."/>
            <person name="Van Aken S."/>
            <person name="Pai G."/>
            <person name="Militscher J."/>
            <person name="Sellers P."/>
            <person name="Gill J.E."/>
            <person name="Feldblyum T.V."/>
            <person name="Preuss D."/>
            <person name="Lin X."/>
            <person name="Nierman W.C."/>
            <person name="Salzberg S.L."/>
            <person name="White O."/>
            <person name="Venter J.C."/>
            <person name="Fraser C.M."/>
            <person name="Kaneko T."/>
            <person name="Nakamura Y."/>
            <person name="Sato S."/>
            <person name="Kato T."/>
            <person name="Asamizu E."/>
            <person name="Sasamoto S."/>
            <person name="Kimura T."/>
            <person name="Idesawa K."/>
            <person name="Kawashima K."/>
            <person name="Kishida Y."/>
            <person name="Kiyokawa C."/>
            <person name="Kohara M."/>
            <person name="Matsumoto M."/>
            <person name="Matsuno A."/>
            <person name="Muraki A."/>
            <person name="Nakayama S."/>
            <person name="Nakazaki N."/>
            <person name="Shinpo S."/>
            <person name="Takeuchi C."/>
            <person name="Wada T."/>
            <person name="Watanabe A."/>
            <person name="Yamada M."/>
            <person name="Yasuda M."/>
            <person name="Tabata S."/>
        </authorList>
    </citation>
    <scope>NUCLEOTIDE SEQUENCE [LARGE SCALE GENOMIC DNA]</scope>
    <source>
        <strain>cv. Columbia</strain>
    </source>
</reference>
<reference key="2">
    <citation type="journal article" date="2017" name="Plant J.">
        <title>Araport11: a complete reannotation of the Arabidopsis thaliana reference genome.</title>
        <authorList>
            <person name="Cheng C.Y."/>
            <person name="Krishnakumar V."/>
            <person name="Chan A.P."/>
            <person name="Thibaud-Nissen F."/>
            <person name="Schobel S."/>
            <person name="Town C.D."/>
        </authorList>
    </citation>
    <scope>GENOME REANNOTATION</scope>
    <source>
        <strain>cv. Columbia</strain>
    </source>
</reference>
<reference key="3">
    <citation type="journal article" date="2009" name="Curr. Biol.">
        <title>ANXUR1 and 2, sister genes to FERONIA/SIRENE, are male factors for coordinated fertilization.</title>
        <authorList>
            <person name="Miyazaki S."/>
            <person name="Murata T."/>
            <person name="Sakurai-Ozato N."/>
            <person name="Kubo M."/>
            <person name="Demura T."/>
            <person name="Fukuda H."/>
            <person name="Hasebe M."/>
        </authorList>
    </citation>
    <scope>FUNCTION</scope>
    <scope>TISSUE SPECIFICITY</scope>
    <scope>SUBCELLULAR LOCATION</scope>
    <scope>DISRUPTION PHENOTYPE</scope>
</reference>
<reference key="4">
    <citation type="journal article" date="2009" name="Mol. Plant">
        <title>Diverse transcriptional programs associated with environmental stress and hormones in the Arabidopsis receptor-like kinase gene family.</title>
        <authorList>
            <person name="Chae L."/>
            <person name="Sudat S."/>
            <person name="Dudoit S."/>
            <person name="Zhu T."/>
            <person name="Luan S."/>
        </authorList>
    </citation>
    <scope>GENE FAMILY</scope>
</reference>
<reference key="5">
    <citation type="journal article" date="2018" name="Protein Sci.">
        <title>Crystal structures of the extracellular domains of the CrRLK1L receptor-like kinases ANXUR1 and ANXUR2.</title>
        <authorList>
            <person name="Du S."/>
            <person name="Qu L.J."/>
            <person name="Xiao J."/>
        </authorList>
    </citation>
    <scope>X-RAY CRYSTALLOGRAPHY (1.80 ANGSTROMS) OF 27-410</scope>
    <scope>GLYCOSYLATION AT ASN-114; ASN-132; ASN-292 AND ASN-302</scope>
</reference>
<sequence>MSGKTRILFFLTCLSFLLVFPTRSNGQDLALSCGTSEASADQDKKKWEPDTKFLKTGNSIHATATYQDPSLLSTVPYMTARIFTAPATYEIPIKGDKRHLLRLYFYPSTYTGLNISNSYFTVEANDVTLLSNFSAAITCQALTQAYLVKEYSLAPTDKDVLSIKFTPSDKYRDAFAFINGIEVIQMPELFDTAALVGFTDQTMDAKTANLQSMFRLNVGGQDIPGSQDSGGLTRTWYNDAPYIFSAGLGVTLQASNNFRINYQNMPVSIAPADIYKTARSQGPNGDINLKSNLTWMFQIDKNFTYILRLHFCEFQLSKINQKVFNIYINNRTAQADTTPADIIGWTGEKGIPMYKDYAIYVDANNGGEEITLQMTPSTFGQPEYYDSSLNGLEIFKMDTMKNLAGPNPEPSPMQAEEEVKKEFKNEKRHAFIIGSAGGVLAVLIGALCFTAYKKKQGYQGGDSHTSSWLPIYGNSTTSGTKSTISGKSNNGSHLSNLAAGLCRRFSLPEIKHGTQNFDDSNVIGVGGFGKVYKGVIDGTTKVAVKKSNPNSEQGLNEFETEIELLSRLRHKHLVSLIGYCDEGGEMCLVYDYMAFGTLREHLYNTKKPQLTWKRRLEIAIGAARGLHYLHTGAKYTIIHRDVKTTNILVDENWVAKVSDFGLSKTGPNMNGGHVTTVVKGSFGYLDPEYFRRQQLTEKSDVYSFGVVLFEILCARPALNPSLPKEQVSLGDWAMNCKRKGNLEDIIDPNLKGKINAECLKKFADTAEKCLNDSGLERPTMGDVLWNLEFALQLQETADGTRHRTPNNGGSSEDLGRGGMAVNVAGRDDVSDLSSEDNTEIFSQIVNPKGR</sequence>
<keyword id="KW-0002">3D-structure</keyword>
<keyword id="KW-0067">ATP-binding</keyword>
<keyword id="KW-1003">Cell membrane</keyword>
<keyword id="KW-0278">Fertilization</keyword>
<keyword id="KW-0325">Glycoprotein</keyword>
<keyword id="KW-0418">Kinase</keyword>
<keyword id="KW-0472">Membrane</keyword>
<keyword id="KW-0547">Nucleotide-binding</keyword>
<keyword id="KW-1185">Reference proteome</keyword>
<keyword id="KW-0723">Serine/threonine-protein kinase</keyword>
<keyword id="KW-0732">Signal</keyword>
<keyword id="KW-0808">Transferase</keyword>
<keyword id="KW-0812">Transmembrane</keyword>
<keyword id="KW-1133">Transmembrane helix</keyword>
<comment type="function">
    <text evidence="6">Receptor-like protein kinase that controls pollen tube behavior by directing rupture at proper timing to release the sperm cell.</text>
</comment>
<comment type="catalytic activity">
    <reaction>
        <text>L-seryl-[protein] + ATP = O-phospho-L-seryl-[protein] + ADP + H(+)</text>
        <dbReference type="Rhea" id="RHEA:17989"/>
        <dbReference type="Rhea" id="RHEA-COMP:9863"/>
        <dbReference type="Rhea" id="RHEA-COMP:11604"/>
        <dbReference type="ChEBI" id="CHEBI:15378"/>
        <dbReference type="ChEBI" id="CHEBI:29999"/>
        <dbReference type="ChEBI" id="CHEBI:30616"/>
        <dbReference type="ChEBI" id="CHEBI:83421"/>
        <dbReference type="ChEBI" id="CHEBI:456216"/>
        <dbReference type="EC" id="2.7.11.1"/>
    </reaction>
</comment>
<comment type="catalytic activity">
    <reaction>
        <text>L-threonyl-[protein] + ATP = O-phospho-L-threonyl-[protein] + ADP + H(+)</text>
        <dbReference type="Rhea" id="RHEA:46608"/>
        <dbReference type="Rhea" id="RHEA-COMP:11060"/>
        <dbReference type="Rhea" id="RHEA-COMP:11605"/>
        <dbReference type="ChEBI" id="CHEBI:15378"/>
        <dbReference type="ChEBI" id="CHEBI:30013"/>
        <dbReference type="ChEBI" id="CHEBI:30616"/>
        <dbReference type="ChEBI" id="CHEBI:61977"/>
        <dbReference type="ChEBI" id="CHEBI:456216"/>
        <dbReference type="EC" id="2.7.11.1"/>
    </reaction>
</comment>
<comment type="subcellular location">
    <subcellularLocation>
        <location evidence="1">Cell membrane</location>
        <topology evidence="1">Single-pass type I membrane protein</topology>
    </subcellularLocation>
</comment>
<comment type="tissue specificity">
    <text evidence="6">Expressed in pollen, but not in pistils or seedlings.</text>
</comment>
<comment type="disruption phenotype">
    <text evidence="6">No effect on male fertility and pollen germination, but siliques slightly shorter. Anx1 and anx2 double mutants show defects in male gametophytes due to premature pollen tube rupture.</text>
</comment>
<comment type="miscellaneous">
    <text>Male paralog of FERONIA, a female factor expressed in synergid cells that controls pollen tube behavior.</text>
</comment>
<comment type="miscellaneous">
    <text>Named Anxur after the husband of the Etruscan goddess of fertility Feronia.</text>
</comment>
<comment type="similarity">
    <text evidence="3">Belongs to the protein kinase superfamily. Ser/Thr protein kinase family.</text>
</comment>